<keyword id="KW-0963">Cytoplasm</keyword>
<keyword id="KW-0378">Hydrolase</keyword>
<keyword id="KW-1185">Reference proteome</keyword>
<keyword id="KW-0694">RNA-binding</keyword>
<keyword id="KW-0820">tRNA-binding</keyword>
<comment type="function">
    <text evidence="1">An aminoacyl-tRNA editing enzyme that deacylates mischarged D-aminoacyl-tRNAs. Also deacylates mischarged glycyl-tRNA(Ala), protecting cells against glycine mischarging by AlaRS. Acts via tRNA-based rather than protein-based catalysis; rejects L-amino acids rather than detecting D-amino acids in the active site. By recycling D-aminoacyl-tRNA to D-amino acids and free tRNA molecules, this enzyme counteracts the toxicity associated with the formation of D-aminoacyl-tRNA entities in vivo and helps enforce protein L-homochirality.</text>
</comment>
<comment type="catalytic activity">
    <reaction evidence="1">
        <text>glycyl-tRNA(Ala) + H2O = tRNA(Ala) + glycine + H(+)</text>
        <dbReference type="Rhea" id="RHEA:53744"/>
        <dbReference type="Rhea" id="RHEA-COMP:9657"/>
        <dbReference type="Rhea" id="RHEA-COMP:13640"/>
        <dbReference type="ChEBI" id="CHEBI:15377"/>
        <dbReference type="ChEBI" id="CHEBI:15378"/>
        <dbReference type="ChEBI" id="CHEBI:57305"/>
        <dbReference type="ChEBI" id="CHEBI:78442"/>
        <dbReference type="ChEBI" id="CHEBI:78522"/>
        <dbReference type="EC" id="3.1.1.96"/>
    </reaction>
</comment>
<comment type="catalytic activity">
    <reaction evidence="1">
        <text>a D-aminoacyl-tRNA + H2O = a tRNA + a D-alpha-amino acid + H(+)</text>
        <dbReference type="Rhea" id="RHEA:13953"/>
        <dbReference type="Rhea" id="RHEA-COMP:10123"/>
        <dbReference type="Rhea" id="RHEA-COMP:10124"/>
        <dbReference type="ChEBI" id="CHEBI:15377"/>
        <dbReference type="ChEBI" id="CHEBI:15378"/>
        <dbReference type="ChEBI" id="CHEBI:59871"/>
        <dbReference type="ChEBI" id="CHEBI:78442"/>
        <dbReference type="ChEBI" id="CHEBI:79333"/>
        <dbReference type="EC" id="3.1.1.96"/>
    </reaction>
</comment>
<comment type="subunit">
    <text evidence="1">Homodimer.</text>
</comment>
<comment type="subcellular location">
    <subcellularLocation>
        <location evidence="1">Cytoplasm</location>
    </subcellularLocation>
</comment>
<comment type="domain">
    <text evidence="1">A Gly-cisPro motif from one monomer fits into the active site of the other monomer to allow specific chiral rejection of L-amino acids.</text>
</comment>
<comment type="similarity">
    <text evidence="1">Belongs to the DTD family.</text>
</comment>
<reference key="1">
    <citation type="journal article" date="2010" name="ISME J.">
        <title>The complete genome sequence of the algal symbiont Dinoroseobacter shibae: a hitchhiker's guide to life in the sea.</title>
        <authorList>
            <person name="Wagner-Dobler I."/>
            <person name="Ballhausen B."/>
            <person name="Berger M."/>
            <person name="Brinkhoff T."/>
            <person name="Buchholz I."/>
            <person name="Bunk B."/>
            <person name="Cypionka H."/>
            <person name="Daniel R."/>
            <person name="Drepper T."/>
            <person name="Gerdts G."/>
            <person name="Hahnke S."/>
            <person name="Han C."/>
            <person name="Jahn D."/>
            <person name="Kalhoefer D."/>
            <person name="Kiss H."/>
            <person name="Klenk H.P."/>
            <person name="Kyrpides N."/>
            <person name="Liebl W."/>
            <person name="Liesegang H."/>
            <person name="Meincke L."/>
            <person name="Pati A."/>
            <person name="Petersen J."/>
            <person name="Piekarski T."/>
            <person name="Pommerenke C."/>
            <person name="Pradella S."/>
            <person name="Pukall R."/>
            <person name="Rabus R."/>
            <person name="Stackebrandt E."/>
            <person name="Thole S."/>
            <person name="Thompson L."/>
            <person name="Tielen P."/>
            <person name="Tomasch J."/>
            <person name="von Jan M."/>
            <person name="Wanphrut N."/>
            <person name="Wichels A."/>
            <person name="Zech H."/>
            <person name="Simon M."/>
        </authorList>
    </citation>
    <scope>NUCLEOTIDE SEQUENCE [LARGE SCALE GENOMIC DNA]</scope>
    <source>
        <strain>DSM 16493 / NCIMB 14021 / DFL 12</strain>
    </source>
</reference>
<feature type="chain" id="PRO_1000081650" description="D-aminoacyl-tRNA deacylase">
    <location>
        <begin position="1"/>
        <end position="145"/>
    </location>
</feature>
<feature type="short sequence motif" description="Gly-cisPro motif, important for rejection of L-amino acids" evidence="1">
    <location>
        <begin position="137"/>
        <end position="138"/>
    </location>
</feature>
<gene>
    <name evidence="1" type="primary">dtd</name>
    <name type="ordered locus">Dshi_2798</name>
</gene>
<protein>
    <recommendedName>
        <fullName evidence="1">D-aminoacyl-tRNA deacylase</fullName>
        <shortName evidence="1">DTD</shortName>
        <ecNumber evidence="1">3.1.1.96</ecNumber>
    </recommendedName>
    <alternativeName>
        <fullName evidence="1">Gly-tRNA(Ala) deacylase</fullName>
    </alternativeName>
</protein>
<sequence>MRALIQRVTEASVRVEGAVIGRTGPGLLVLVCGMPGDTDRSVAALAGKIAKLRIFRDAEGRMNRSLLDVGGGALVVSQFTLAADTSRGNRPGFSAAAPPKEGERLYEAFAAALAETGVAVETGRFGANMAVALVNDGPVTIWMEG</sequence>
<proteinExistence type="inferred from homology"/>
<dbReference type="EC" id="3.1.1.96" evidence="1"/>
<dbReference type="EMBL" id="CP000830">
    <property type="protein sequence ID" value="ABV94531.1"/>
    <property type="molecule type" value="Genomic_DNA"/>
</dbReference>
<dbReference type="RefSeq" id="WP_012179459.1">
    <property type="nucleotide sequence ID" value="NC_009952.1"/>
</dbReference>
<dbReference type="SMR" id="A8LJ36"/>
<dbReference type="STRING" id="398580.Dshi_2798"/>
<dbReference type="KEGG" id="dsh:Dshi_2798"/>
<dbReference type="eggNOG" id="COG1490">
    <property type="taxonomic scope" value="Bacteria"/>
</dbReference>
<dbReference type="HOGENOM" id="CLU_076901_1_1_5"/>
<dbReference type="OrthoDB" id="9801395at2"/>
<dbReference type="Proteomes" id="UP000006833">
    <property type="component" value="Chromosome"/>
</dbReference>
<dbReference type="GO" id="GO:0005737">
    <property type="term" value="C:cytoplasm"/>
    <property type="evidence" value="ECO:0007669"/>
    <property type="project" value="UniProtKB-SubCell"/>
</dbReference>
<dbReference type="GO" id="GO:0051500">
    <property type="term" value="F:D-tyrosyl-tRNA(Tyr) deacylase activity"/>
    <property type="evidence" value="ECO:0007669"/>
    <property type="project" value="TreeGrafter"/>
</dbReference>
<dbReference type="GO" id="GO:0106026">
    <property type="term" value="F:Gly-tRNA(Ala) deacylase activity"/>
    <property type="evidence" value="ECO:0007669"/>
    <property type="project" value="UniProtKB-UniRule"/>
</dbReference>
<dbReference type="GO" id="GO:0043908">
    <property type="term" value="F:Ser(Gly)-tRNA(Ala) hydrolase activity"/>
    <property type="evidence" value="ECO:0007669"/>
    <property type="project" value="UniProtKB-UniRule"/>
</dbReference>
<dbReference type="GO" id="GO:0000049">
    <property type="term" value="F:tRNA binding"/>
    <property type="evidence" value="ECO:0007669"/>
    <property type="project" value="UniProtKB-UniRule"/>
</dbReference>
<dbReference type="GO" id="GO:0019478">
    <property type="term" value="P:D-amino acid catabolic process"/>
    <property type="evidence" value="ECO:0007669"/>
    <property type="project" value="UniProtKB-UniRule"/>
</dbReference>
<dbReference type="FunFam" id="3.50.80.10:FF:000001">
    <property type="entry name" value="D-aminoacyl-tRNA deacylase"/>
    <property type="match status" value="1"/>
</dbReference>
<dbReference type="Gene3D" id="3.50.80.10">
    <property type="entry name" value="D-tyrosyl-tRNA(Tyr) deacylase"/>
    <property type="match status" value="1"/>
</dbReference>
<dbReference type="HAMAP" id="MF_00518">
    <property type="entry name" value="Deacylase_Dtd"/>
    <property type="match status" value="1"/>
</dbReference>
<dbReference type="InterPro" id="IPR003732">
    <property type="entry name" value="Daa-tRNA_deacyls_DTD"/>
</dbReference>
<dbReference type="InterPro" id="IPR023509">
    <property type="entry name" value="DTD-like_sf"/>
</dbReference>
<dbReference type="NCBIfam" id="TIGR00256">
    <property type="entry name" value="D-aminoacyl-tRNA deacylase"/>
    <property type="match status" value="1"/>
</dbReference>
<dbReference type="PANTHER" id="PTHR10472:SF5">
    <property type="entry name" value="D-AMINOACYL-TRNA DEACYLASE 1"/>
    <property type="match status" value="1"/>
</dbReference>
<dbReference type="PANTHER" id="PTHR10472">
    <property type="entry name" value="D-TYROSYL-TRNA TYR DEACYLASE"/>
    <property type="match status" value="1"/>
</dbReference>
<dbReference type="Pfam" id="PF02580">
    <property type="entry name" value="Tyr_Deacylase"/>
    <property type="match status" value="1"/>
</dbReference>
<dbReference type="SUPFAM" id="SSF69500">
    <property type="entry name" value="DTD-like"/>
    <property type="match status" value="1"/>
</dbReference>
<accession>A8LJ36</accession>
<organism>
    <name type="scientific">Dinoroseobacter shibae (strain DSM 16493 / NCIMB 14021 / DFL 12)</name>
    <dbReference type="NCBI Taxonomy" id="398580"/>
    <lineage>
        <taxon>Bacteria</taxon>
        <taxon>Pseudomonadati</taxon>
        <taxon>Pseudomonadota</taxon>
        <taxon>Alphaproteobacteria</taxon>
        <taxon>Rhodobacterales</taxon>
        <taxon>Roseobacteraceae</taxon>
        <taxon>Dinoroseobacter</taxon>
    </lineage>
</organism>
<name>DTD_DINSH</name>
<evidence type="ECO:0000255" key="1">
    <source>
        <dbReference type="HAMAP-Rule" id="MF_00518"/>
    </source>
</evidence>